<name>ATPI_CUSEX</name>
<organism>
    <name type="scientific">Cuscuta exaltata</name>
    <name type="common">Tall dodder</name>
    <dbReference type="NCBI Taxonomy" id="476139"/>
    <lineage>
        <taxon>Eukaryota</taxon>
        <taxon>Viridiplantae</taxon>
        <taxon>Streptophyta</taxon>
        <taxon>Embryophyta</taxon>
        <taxon>Tracheophyta</taxon>
        <taxon>Spermatophyta</taxon>
        <taxon>Magnoliopsida</taxon>
        <taxon>eudicotyledons</taxon>
        <taxon>Gunneridae</taxon>
        <taxon>Pentapetalae</taxon>
        <taxon>asterids</taxon>
        <taxon>lamiids</taxon>
        <taxon>Solanales</taxon>
        <taxon>Convolvulaceae</taxon>
        <taxon>Cuscuteae</taxon>
        <taxon>Cuscuta</taxon>
        <taxon>Cuscuta subgen. Monogynella</taxon>
    </lineage>
</organism>
<evidence type="ECO:0000255" key="1">
    <source>
        <dbReference type="HAMAP-Rule" id="MF_01393"/>
    </source>
</evidence>
<evidence type="ECO:0000305" key="2"/>
<protein>
    <recommendedName>
        <fullName evidence="1">ATP synthase subunit a, plastid</fullName>
    </recommendedName>
    <alternativeName>
        <fullName evidence="1">ATP synthase F0 sector subunit a</fullName>
    </alternativeName>
    <alternativeName>
        <fullName evidence="1">F-ATPase subunit IV</fullName>
    </alternativeName>
</protein>
<proteinExistence type="inferred from homology"/>
<dbReference type="EMBL" id="EU189132">
    <property type="protein sequence ID" value="ABW83683.1"/>
    <property type="molecule type" value="Genomic_DNA"/>
</dbReference>
<dbReference type="RefSeq" id="YP_001542519.1">
    <property type="nucleotide sequence ID" value="NC_009963.1"/>
</dbReference>
<dbReference type="SMR" id="A8W3B2"/>
<dbReference type="GeneID" id="5729601"/>
<dbReference type="GO" id="GO:0042170">
    <property type="term" value="C:plastid membrane"/>
    <property type="evidence" value="ECO:0007669"/>
    <property type="project" value="UniProtKB-SubCell"/>
</dbReference>
<dbReference type="GO" id="GO:0045259">
    <property type="term" value="C:proton-transporting ATP synthase complex"/>
    <property type="evidence" value="ECO:0007669"/>
    <property type="project" value="UniProtKB-KW"/>
</dbReference>
<dbReference type="GO" id="GO:0015078">
    <property type="term" value="F:proton transmembrane transporter activity"/>
    <property type="evidence" value="ECO:0007669"/>
    <property type="project" value="InterPro"/>
</dbReference>
<dbReference type="GO" id="GO:0015986">
    <property type="term" value="P:proton motive force-driven ATP synthesis"/>
    <property type="evidence" value="ECO:0007669"/>
    <property type="project" value="InterPro"/>
</dbReference>
<dbReference type="CDD" id="cd00310">
    <property type="entry name" value="ATP-synt_Fo_a_6"/>
    <property type="match status" value="1"/>
</dbReference>
<dbReference type="FunFam" id="1.20.120.220:FF:000001">
    <property type="entry name" value="ATP synthase subunit a, chloroplastic"/>
    <property type="match status" value="1"/>
</dbReference>
<dbReference type="Gene3D" id="1.20.120.220">
    <property type="entry name" value="ATP synthase, F0 complex, subunit A"/>
    <property type="match status" value="1"/>
</dbReference>
<dbReference type="HAMAP" id="MF_01393">
    <property type="entry name" value="ATP_synth_a_bact"/>
    <property type="match status" value="1"/>
</dbReference>
<dbReference type="InterPro" id="IPR045082">
    <property type="entry name" value="ATP_syn_F0_a_bact/chloroplast"/>
</dbReference>
<dbReference type="InterPro" id="IPR000568">
    <property type="entry name" value="ATP_synth_F0_asu"/>
</dbReference>
<dbReference type="InterPro" id="IPR023011">
    <property type="entry name" value="ATP_synth_F0_asu_AS"/>
</dbReference>
<dbReference type="InterPro" id="IPR035908">
    <property type="entry name" value="F0_ATP_A_sf"/>
</dbReference>
<dbReference type="NCBIfam" id="TIGR01131">
    <property type="entry name" value="ATP_synt_6_or_A"/>
    <property type="match status" value="1"/>
</dbReference>
<dbReference type="PANTHER" id="PTHR42823">
    <property type="entry name" value="ATP SYNTHASE SUBUNIT A, CHLOROPLASTIC"/>
    <property type="match status" value="1"/>
</dbReference>
<dbReference type="PANTHER" id="PTHR42823:SF3">
    <property type="entry name" value="ATP SYNTHASE SUBUNIT A, CHLOROPLASTIC"/>
    <property type="match status" value="1"/>
</dbReference>
<dbReference type="Pfam" id="PF00119">
    <property type="entry name" value="ATP-synt_A"/>
    <property type="match status" value="1"/>
</dbReference>
<dbReference type="PRINTS" id="PR00123">
    <property type="entry name" value="ATPASEA"/>
</dbReference>
<dbReference type="SUPFAM" id="SSF81336">
    <property type="entry name" value="F1F0 ATP synthase subunit A"/>
    <property type="match status" value="1"/>
</dbReference>
<dbReference type="PROSITE" id="PS00449">
    <property type="entry name" value="ATPASE_A"/>
    <property type="match status" value="1"/>
</dbReference>
<gene>
    <name evidence="1" type="primary">atpI</name>
</gene>
<accession>A8W3B2</accession>
<geneLocation type="plastid"/>
<feature type="chain" id="PRO_0000362548" description="ATP synthase subunit a, plastid">
    <location>
        <begin position="1"/>
        <end position="247"/>
    </location>
</feature>
<feature type="transmembrane region" description="Helical" evidence="1">
    <location>
        <begin position="33"/>
        <end position="53"/>
    </location>
</feature>
<feature type="transmembrane region" description="Helical" evidence="1">
    <location>
        <begin position="95"/>
        <end position="115"/>
    </location>
</feature>
<feature type="transmembrane region" description="Helical" evidence="1">
    <location>
        <begin position="134"/>
        <end position="154"/>
    </location>
</feature>
<feature type="transmembrane region" description="Helical" evidence="1">
    <location>
        <begin position="199"/>
        <end position="219"/>
    </location>
</feature>
<feature type="transmembrane region" description="Helical" evidence="1">
    <location>
        <begin position="220"/>
        <end position="240"/>
    </location>
</feature>
<reference key="1">
    <citation type="journal article" date="2007" name="BMC Plant Biol.">
        <title>Complete plastid genome sequences suggest strong selection for retention of photosynthetic genes in the parasitic plant genus Cuscuta.</title>
        <authorList>
            <person name="McNeal J.R."/>
            <person name="Kuehl J.V."/>
            <person name="Boore J.L."/>
            <person name="dePamphilis C.W."/>
        </authorList>
    </citation>
    <scope>NUCLEOTIDE SEQUENCE [LARGE SCALE GENOMIC DNA]</scope>
</reference>
<comment type="function">
    <text evidence="1">Key component of the proton channel; it plays a direct role in the translocation of protons across the membrane.</text>
</comment>
<comment type="subunit">
    <text evidence="1">F-type ATPases have 2 components, CF(1) - the catalytic core - and CF(0) - the membrane proton channel. CF(1) has five subunits: alpha(3), beta(3), gamma(1), delta(1), epsilon(1). CF(0) has four main subunits: a, b, b' and c.</text>
</comment>
<comment type="subcellular location">
    <subcellularLocation>
        <location evidence="2">Plastid membrane</location>
        <topology evidence="1">Multi-pass membrane protein</topology>
    </subcellularLocation>
</comment>
<comment type="similarity">
    <text evidence="1">Belongs to the ATPase A chain family.</text>
</comment>
<comment type="caution">
    <text evidence="2">Young tissue from this organism is photosynthetic and contains some thylakoids, although the photosynthetic activity does not exceed the light compensation point.</text>
</comment>
<keyword id="KW-0066">ATP synthesis</keyword>
<keyword id="KW-0138">CF(0)</keyword>
<keyword id="KW-0375">Hydrogen ion transport</keyword>
<keyword id="KW-0406">Ion transport</keyword>
<keyword id="KW-0472">Membrane</keyword>
<keyword id="KW-0934">Plastid</keyword>
<keyword id="KW-0812">Transmembrane</keyword>
<keyword id="KW-1133">Transmembrane helix</keyword>
<keyword id="KW-0813">Transport</keyword>
<sequence>MDVLSCSINTLKGLYDISGVEVGQHFYWQIGDFLVHGQVLITSWVVIAILLGSATVAVRNPQTIPTGGQNFFEYVLEFIRDVSKTQIGEEYGPWVPFIGTMFLFIFVSNWSGALLPWKILQLPHGELAAPTNDINTTVALALLTSAAYFYAGILKKGLGYFEKYIKPTPILLPINILEDFTKPLSLSFRLFGNILADELVVVVLVSLVPSVVPIPVMLLGLFTSGIQALIFATLAAAYIGESMEGHL</sequence>